<accession>Q6GZN3</accession>
<organismHost>
    <name type="scientific">Dryophytes versicolor</name>
    <name type="common">chameleon treefrog</name>
    <dbReference type="NCBI Taxonomy" id="30343"/>
</organismHost>
<organismHost>
    <name type="scientific">Lithobates pipiens</name>
    <name type="common">Northern leopard frog</name>
    <name type="synonym">Rana pipiens</name>
    <dbReference type="NCBI Taxonomy" id="8404"/>
</organismHost>
<organismHost>
    <name type="scientific">Lithobates sylvaticus</name>
    <name type="common">Wood frog</name>
    <name type="synonym">Rana sylvatica</name>
    <dbReference type="NCBI Taxonomy" id="45438"/>
</organismHost>
<organismHost>
    <name type="scientific">Notophthalmus viridescens</name>
    <name type="common">Eastern newt</name>
    <name type="synonym">Triturus viridescens</name>
    <dbReference type="NCBI Taxonomy" id="8316"/>
</organismHost>
<dbReference type="EMBL" id="AY548484">
    <property type="protein sequence ID" value="AAT09752.1"/>
    <property type="molecule type" value="Genomic_DNA"/>
</dbReference>
<dbReference type="RefSeq" id="YP_031671.1">
    <property type="nucleotide sequence ID" value="NC_005946.1"/>
</dbReference>
<dbReference type="KEGG" id="vg:2947811"/>
<dbReference type="Proteomes" id="UP000008770">
    <property type="component" value="Segment"/>
</dbReference>
<name>092R_FRG3G</name>
<keyword id="KW-1185">Reference proteome</keyword>
<protein>
    <recommendedName>
        <fullName>Uncharacterized protein 092R</fullName>
    </recommendedName>
</protein>
<organism>
    <name type="scientific">Frog virus 3 (isolate Goorha)</name>
    <name type="common">FV-3</name>
    <dbReference type="NCBI Taxonomy" id="654924"/>
    <lineage>
        <taxon>Viruses</taxon>
        <taxon>Varidnaviria</taxon>
        <taxon>Bamfordvirae</taxon>
        <taxon>Nucleocytoviricota</taxon>
        <taxon>Megaviricetes</taxon>
        <taxon>Pimascovirales</taxon>
        <taxon>Iridoviridae</taxon>
        <taxon>Alphairidovirinae</taxon>
        <taxon>Ranavirus</taxon>
        <taxon>Frog virus 3</taxon>
    </lineage>
</organism>
<sequence length="79" mass="8907">MSLHLTLVLSGKNLKIVVESINVVTARSERSSLLDCKRCCKRPNIPHTETVDFVWGFNVETRLIAAETQSDFGRKHPGR</sequence>
<feature type="chain" id="PRO_0000410560" description="Uncharacterized protein 092R">
    <location>
        <begin position="1"/>
        <end position="79"/>
    </location>
</feature>
<gene>
    <name type="ORF">FV3-092R</name>
</gene>
<proteinExistence type="predicted"/>
<reference key="1">
    <citation type="journal article" date="2004" name="Virology">
        <title>Comparative genomic analyses of frog virus 3, type species of the genus Ranavirus (family Iridoviridae).</title>
        <authorList>
            <person name="Tan W.G."/>
            <person name="Barkman T.J."/>
            <person name="Gregory Chinchar V."/>
            <person name="Essani K."/>
        </authorList>
    </citation>
    <scope>NUCLEOTIDE SEQUENCE [LARGE SCALE GENOMIC DNA]</scope>
</reference>